<evidence type="ECO:0000255" key="1">
    <source>
        <dbReference type="HAMAP-Rule" id="MF_00421"/>
    </source>
</evidence>
<dbReference type="EC" id="6.3.5.3" evidence="1"/>
<dbReference type="EC" id="3.5.1.2" evidence="1"/>
<dbReference type="EMBL" id="CP000230">
    <property type="protein sequence ID" value="ABC21513.1"/>
    <property type="molecule type" value="Genomic_DNA"/>
</dbReference>
<dbReference type="RefSeq" id="WP_011388467.1">
    <property type="nucleotide sequence ID" value="NC_007643.1"/>
</dbReference>
<dbReference type="RefSeq" id="YP_425800.1">
    <property type="nucleotide sequence ID" value="NC_007643.1"/>
</dbReference>
<dbReference type="SMR" id="Q2RWI2"/>
<dbReference type="STRING" id="269796.Rru_A0709"/>
<dbReference type="EnsemblBacteria" id="ABC21513">
    <property type="protein sequence ID" value="ABC21513"/>
    <property type="gene ID" value="Rru_A0709"/>
</dbReference>
<dbReference type="KEGG" id="rru:Rru_A0709"/>
<dbReference type="PATRIC" id="fig|269796.9.peg.761"/>
<dbReference type="eggNOG" id="COG0047">
    <property type="taxonomic scope" value="Bacteria"/>
</dbReference>
<dbReference type="HOGENOM" id="CLU_001031_3_1_5"/>
<dbReference type="PhylomeDB" id="Q2RWI2"/>
<dbReference type="UniPathway" id="UPA00074">
    <property type="reaction ID" value="UER00128"/>
</dbReference>
<dbReference type="Proteomes" id="UP000001929">
    <property type="component" value="Chromosome"/>
</dbReference>
<dbReference type="GO" id="GO:0005737">
    <property type="term" value="C:cytoplasm"/>
    <property type="evidence" value="ECO:0007669"/>
    <property type="project" value="UniProtKB-SubCell"/>
</dbReference>
<dbReference type="GO" id="GO:0005524">
    <property type="term" value="F:ATP binding"/>
    <property type="evidence" value="ECO:0007669"/>
    <property type="project" value="UniProtKB-KW"/>
</dbReference>
<dbReference type="GO" id="GO:0004359">
    <property type="term" value="F:glutaminase activity"/>
    <property type="evidence" value="ECO:0007669"/>
    <property type="project" value="UniProtKB-EC"/>
</dbReference>
<dbReference type="GO" id="GO:0004642">
    <property type="term" value="F:phosphoribosylformylglycinamidine synthase activity"/>
    <property type="evidence" value="ECO:0007669"/>
    <property type="project" value="UniProtKB-UniRule"/>
</dbReference>
<dbReference type="GO" id="GO:0006189">
    <property type="term" value="P:'de novo' IMP biosynthetic process"/>
    <property type="evidence" value="ECO:0007669"/>
    <property type="project" value="UniProtKB-UniRule"/>
</dbReference>
<dbReference type="CDD" id="cd01740">
    <property type="entry name" value="GATase1_FGAR_AT"/>
    <property type="match status" value="1"/>
</dbReference>
<dbReference type="Gene3D" id="3.40.50.880">
    <property type="match status" value="1"/>
</dbReference>
<dbReference type="HAMAP" id="MF_00421">
    <property type="entry name" value="PurQ"/>
    <property type="match status" value="1"/>
</dbReference>
<dbReference type="InterPro" id="IPR029062">
    <property type="entry name" value="Class_I_gatase-like"/>
</dbReference>
<dbReference type="InterPro" id="IPR010075">
    <property type="entry name" value="PRibForGlyAmidine_synth_PurQ"/>
</dbReference>
<dbReference type="NCBIfam" id="TIGR01737">
    <property type="entry name" value="FGAM_synth_I"/>
    <property type="match status" value="1"/>
</dbReference>
<dbReference type="NCBIfam" id="NF002957">
    <property type="entry name" value="PRK03619.1"/>
    <property type="match status" value="1"/>
</dbReference>
<dbReference type="PANTHER" id="PTHR47552">
    <property type="entry name" value="PHOSPHORIBOSYLFORMYLGLYCINAMIDINE SYNTHASE SUBUNIT PURQ"/>
    <property type="match status" value="1"/>
</dbReference>
<dbReference type="PANTHER" id="PTHR47552:SF1">
    <property type="entry name" value="PHOSPHORIBOSYLFORMYLGLYCINAMIDINE SYNTHASE SUBUNIT PURQ"/>
    <property type="match status" value="1"/>
</dbReference>
<dbReference type="Pfam" id="PF13507">
    <property type="entry name" value="GATase_5"/>
    <property type="match status" value="1"/>
</dbReference>
<dbReference type="PIRSF" id="PIRSF001586">
    <property type="entry name" value="FGAM_synth_I"/>
    <property type="match status" value="1"/>
</dbReference>
<dbReference type="SMART" id="SM01211">
    <property type="entry name" value="GATase_5"/>
    <property type="match status" value="1"/>
</dbReference>
<dbReference type="SUPFAM" id="SSF52317">
    <property type="entry name" value="Class I glutamine amidotransferase-like"/>
    <property type="match status" value="1"/>
</dbReference>
<dbReference type="PROSITE" id="PS51273">
    <property type="entry name" value="GATASE_TYPE_1"/>
    <property type="match status" value="1"/>
</dbReference>
<organism>
    <name type="scientific">Rhodospirillum rubrum (strain ATCC 11170 / ATH 1.1.1 / DSM 467 / LMG 4362 / NCIMB 8255 / S1)</name>
    <dbReference type="NCBI Taxonomy" id="269796"/>
    <lineage>
        <taxon>Bacteria</taxon>
        <taxon>Pseudomonadati</taxon>
        <taxon>Pseudomonadota</taxon>
        <taxon>Alphaproteobacteria</taxon>
        <taxon>Rhodospirillales</taxon>
        <taxon>Rhodospirillaceae</taxon>
        <taxon>Rhodospirillum</taxon>
    </lineage>
</organism>
<name>PURQ_RHORT</name>
<feature type="chain" id="PRO_0000252726" description="Phosphoribosylformylglycinamidine synthase subunit PurQ">
    <location>
        <begin position="1"/>
        <end position="230"/>
    </location>
</feature>
<feature type="domain" description="Glutamine amidotransferase type-1" evidence="1">
    <location>
        <begin position="3"/>
        <end position="230"/>
    </location>
</feature>
<feature type="active site" description="Nucleophile" evidence="1">
    <location>
        <position position="87"/>
    </location>
</feature>
<feature type="active site" evidence="1">
    <location>
        <position position="204"/>
    </location>
</feature>
<feature type="active site" evidence="1">
    <location>
        <position position="206"/>
    </location>
</feature>
<protein>
    <recommendedName>
        <fullName evidence="1">Phosphoribosylformylglycinamidine synthase subunit PurQ</fullName>
        <shortName evidence="1">FGAM synthase</shortName>
        <ecNumber evidence="1">6.3.5.3</ecNumber>
    </recommendedName>
    <alternativeName>
        <fullName evidence="1">Formylglycinamide ribonucleotide amidotransferase subunit I</fullName>
        <shortName evidence="1">FGAR amidotransferase I</shortName>
        <shortName evidence="1">FGAR-AT I</shortName>
    </alternativeName>
    <alternativeName>
        <fullName evidence="1">Glutaminase PurQ</fullName>
        <ecNumber evidence="1">3.5.1.2</ecNumber>
    </alternativeName>
    <alternativeName>
        <fullName evidence="1">Phosphoribosylformylglycinamidine synthase subunit I</fullName>
    </alternativeName>
</protein>
<comment type="function">
    <text evidence="1">Part of the phosphoribosylformylglycinamidine synthase complex involved in the purines biosynthetic pathway. Catalyzes the ATP-dependent conversion of formylglycinamide ribonucleotide (FGAR) and glutamine to yield formylglycinamidine ribonucleotide (FGAM) and glutamate. The FGAM synthase complex is composed of three subunits. PurQ produces an ammonia molecule by converting glutamine to glutamate. PurL transfers the ammonia molecule to FGAR to form FGAM in an ATP-dependent manner. PurS interacts with PurQ and PurL and is thought to assist in the transfer of the ammonia molecule from PurQ to PurL.</text>
</comment>
<comment type="catalytic activity">
    <reaction evidence="1">
        <text>N(2)-formyl-N(1)-(5-phospho-beta-D-ribosyl)glycinamide + L-glutamine + ATP + H2O = 2-formamido-N(1)-(5-O-phospho-beta-D-ribosyl)acetamidine + L-glutamate + ADP + phosphate + H(+)</text>
        <dbReference type="Rhea" id="RHEA:17129"/>
        <dbReference type="ChEBI" id="CHEBI:15377"/>
        <dbReference type="ChEBI" id="CHEBI:15378"/>
        <dbReference type="ChEBI" id="CHEBI:29985"/>
        <dbReference type="ChEBI" id="CHEBI:30616"/>
        <dbReference type="ChEBI" id="CHEBI:43474"/>
        <dbReference type="ChEBI" id="CHEBI:58359"/>
        <dbReference type="ChEBI" id="CHEBI:147286"/>
        <dbReference type="ChEBI" id="CHEBI:147287"/>
        <dbReference type="ChEBI" id="CHEBI:456216"/>
        <dbReference type="EC" id="6.3.5.3"/>
    </reaction>
</comment>
<comment type="catalytic activity">
    <reaction evidence="1">
        <text>L-glutamine + H2O = L-glutamate + NH4(+)</text>
        <dbReference type="Rhea" id="RHEA:15889"/>
        <dbReference type="ChEBI" id="CHEBI:15377"/>
        <dbReference type="ChEBI" id="CHEBI:28938"/>
        <dbReference type="ChEBI" id="CHEBI:29985"/>
        <dbReference type="ChEBI" id="CHEBI:58359"/>
        <dbReference type="EC" id="3.5.1.2"/>
    </reaction>
</comment>
<comment type="pathway">
    <text evidence="1">Purine metabolism; IMP biosynthesis via de novo pathway; 5-amino-1-(5-phospho-D-ribosyl)imidazole from N(2)-formyl-N(1)-(5-phospho-D-ribosyl)glycinamide: step 1/2.</text>
</comment>
<comment type="subunit">
    <text evidence="1">Part of the FGAM synthase complex composed of 1 PurL, 1 PurQ and 2 PurS subunits.</text>
</comment>
<comment type="subcellular location">
    <subcellularLocation>
        <location evidence="1">Cytoplasm</location>
    </subcellularLocation>
</comment>
<sequence>MNSAIIVFPGTNRERDMAKALTLVGGKAPQMVWHRDSALPAGLDLVVLPGGFSYGDYLRSGAMGARSPILDAVRRFAEAGGHVLGVCNGFQILTEAGLLPGALMRNRDLRFICRDVHLRVETIASPYTSAYGLGEVARVPVAHHDGNYFADDATLAQLADEDRVAFRYCAADGTVGEASTPNGSRDAIAGILSANRRVLGMMPHPENLVEPALGGIGGRALFQSIVESLS</sequence>
<accession>Q2RWI2</accession>
<proteinExistence type="inferred from homology"/>
<gene>
    <name evidence="1" type="primary">purQ</name>
    <name type="ordered locus">Rru_A0709</name>
</gene>
<reference key="1">
    <citation type="journal article" date="2011" name="Stand. Genomic Sci.">
        <title>Complete genome sequence of Rhodospirillum rubrum type strain (S1).</title>
        <authorList>
            <person name="Munk A.C."/>
            <person name="Copeland A."/>
            <person name="Lucas S."/>
            <person name="Lapidus A."/>
            <person name="Del Rio T.G."/>
            <person name="Barry K."/>
            <person name="Detter J.C."/>
            <person name="Hammon N."/>
            <person name="Israni S."/>
            <person name="Pitluck S."/>
            <person name="Brettin T."/>
            <person name="Bruce D."/>
            <person name="Han C."/>
            <person name="Tapia R."/>
            <person name="Gilna P."/>
            <person name="Schmutz J."/>
            <person name="Larimer F."/>
            <person name="Land M."/>
            <person name="Kyrpides N.C."/>
            <person name="Mavromatis K."/>
            <person name="Richardson P."/>
            <person name="Rohde M."/>
            <person name="Goeker M."/>
            <person name="Klenk H.P."/>
            <person name="Zhang Y."/>
            <person name="Roberts G.P."/>
            <person name="Reslewic S."/>
            <person name="Schwartz D.C."/>
        </authorList>
    </citation>
    <scope>NUCLEOTIDE SEQUENCE [LARGE SCALE GENOMIC DNA]</scope>
    <source>
        <strain>ATCC 11170 / ATH 1.1.1 / DSM 467 / LMG 4362 / NCIMB 8255 / S1</strain>
    </source>
</reference>
<keyword id="KW-0067">ATP-binding</keyword>
<keyword id="KW-0963">Cytoplasm</keyword>
<keyword id="KW-0315">Glutamine amidotransferase</keyword>
<keyword id="KW-0378">Hydrolase</keyword>
<keyword id="KW-0436">Ligase</keyword>
<keyword id="KW-0547">Nucleotide-binding</keyword>
<keyword id="KW-0658">Purine biosynthesis</keyword>
<keyword id="KW-1185">Reference proteome</keyword>